<reference key="1">
    <citation type="journal article" date="2005" name="J. Mol. Evol.">
        <title>PAQR proteins: a novel membrane receptor family defined by an ancient 7-transmembrane pass motif.</title>
        <authorList>
            <person name="Tang Y.T."/>
            <person name="Hu T."/>
            <person name="Arterburn M."/>
            <person name="Boyle B."/>
            <person name="Bright J.M."/>
            <person name="Emtage P.C."/>
            <person name="Funk W.D."/>
        </authorList>
    </citation>
    <scope>NUCLEOTIDE SEQUENCE [MRNA]</scope>
    <scope>TISSUE SPECIFICITY</scope>
</reference>
<reference key="2">
    <citation type="submission" date="1999-02" db="EMBL/GenBank/DDBJ databases">
        <title>Cloning and characterization of TESBP1A.</title>
        <authorList>
            <person name="Sugihara T."/>
        </authorList>
    </citation>
    <scope>NUCLEOTIDE SEQUENCE [MRNA]</scope>
</reference>
<reference key="3">
    <citation type="journal article" date="2000" name="Genome Res.">
        <title>Identification of novel human genes evolutionarily conserved in Caenorhabditis elegans by comparative proteomics.</title>
        <authorList>
            <person name="Lai C.-H."/>
            <person name="Chou C.-Y."/>
            <person name="Ch'ang L.-Y."/>
            <person name="Liu C.-S."/>
            <person name="Lin W.-C."/>
        </authorList>
    </citation>
    <scope>NUCLEOTIDE SEQUENCE [LARGE SCALE MRNA]</scope>
</reference>
<reference key="4">
    <citation type="journal article" date="2004" name="Nat. Genet.">
        <title>Complete sequencing and characterization of 21,243 full-length human cDNAs.</title>
        <authorList>
            <person name="Ota T."/>
            <person name="Suzuki Y."/>
            <person name="Nishikawa T."/>
            <person name="Otsuki T."/>
            <person name="Sugiyama T."/>
            <person name="Irie R."/>
            <person name="Wakamatsu A."/>
            <person name="Hayashi K."/>
            <person name="Sato H."/>
            <person name="Nagai K."/>
            <person name="Kimura K."/>
            <person name="Makita H."/>
            <person name="Sekine M."/>
            <person name="Obayashi M."/>
            <person name="Nishi T."/>
            <person name="Shibahara T."/>
            <person name="Tanaka T."/>
            <person name="Ishii S."/>
            <person name="Yamamoto J."/>
            <person name="Saito K."/>
            <person name="Kawai Y."/>
            <person name="Isono Y."/>
            <person name="Nakamura Y."/>
            <person name="Nagahari K."/>
            <person name="Murakami K."/>
            <person name="Yasuda T."/>
            <person name="Iwayanagi T."/>
            <person name="Wagatsuma M."/>
            <person name="Shiratori A."/>
            <person name="Sudo H."/>
            <person name="Hosoiri T."/>
            <person name="Kaku Y."/>
            <person name="Kodaira H."/>
            <person name="Kondo H."/>
            <person name="Sugawara M."/>
            <person name="Takahashi M."/>
            <person name="Kanda K."/>
            <person name="Yokoi T."/>
            <person name="Furuya T."/>
            <person name="Kikkawa E."/>
            <person name="Omura Y."/>
            <person name="Abe K."/>
            <person name="Kamihara K."/>
            <person name="Katsuta N."/>
            <person name="Sato K."/>
            <person name="Tanikawa M."/>
            <person name="Yamazaki M."/>
            <person name="Ninomiya K."/>
            <person name="Ishibashi T."/>
            <person name="Yamashita H."/>
            <person name="Murakawa K."/>
            <person name="Fujimori K."/>
            <person name="Tanai H."/>
            <person name="Kimata M."/>
            <person name="Watanabe M."/>
            <person name="Hiraoka S."/>
            <person name="Chiba Y."/>
            <person name="Ishida S."/>
            <person name="Ono Y."/>
            <person name="Takiguchi S."/>
            <person name="Watanabe S."/>
            <person name="Yosida M."/>
            <person name="Hotuta T."/>
            <person name="Kusano J."/>
            <person name="Kanehori K."/>
            <person name="Takahashi-Fujii A."/>
            <person name="Hara H."/>
            <person name="Tanase T.-O."/>
            <person name="Nomura Y."/>
            <person name="Togiya S."/>
            <person name="Komai F."/>
            <person name="Hara R."/>
            <person name="Takeuchi K."/>
            <person name="Arita M."/>
            <person name="Imose N."/>
            <person name="Musashino K."/>
            <person name="Yuuki H."/>
            <person name="Oshima A."/>
            <person name="Sasaki N."/>
            <person name="Aotsuka S."/>
            <person name="Yoshikawa Y."/>
            <person name="Matsunawa H."/>
            <person name="Ichihara T."/>
            <person name="Shiohata N."/>
            <person name="Sano S."/>
            <person name="Moriya S."/>
            <person name="Momiyama H."/>
            <person name="Satoh N."/>
            <person name="Takami S."/>
            <person name="Terashima Y."/>
            <person name="Suzuki O."/>
            <person name="Nakagawa S."/>
            <person name="Senoh A."/>
            <person name="Mizoguchi H."/>
            <person name="Goto Y."/>
            <person name="Shimizu F."/>
            <person name="Wakebe H."/>
            <person name="Hishigaki H."/>
            <person name="Watanabe T."/>
            <person name="Sugiyama A."/>
            <person name="Takemoto M."/>
            <person name="Kawakami B."/>
            <person name="Yamazaki M."/>
            <person name="Watanabe K."/>
            <person name="Kumagai A."/>
            <person name="Itakura S."/>
            <person name="Fukuzumi Y."/>
            <person name="Fujimori Y."/>
            <person name="Komiyama M."/>
            <person name="Tashiro H."/>
            <person name="Tanigami A."/>
            <person name="Fujiwara T."/>
            <person name="Ono T."/>
            <person name="Yamada K."/>
            <person name="Fujii Y."/>
            <person name="Ozaki K."/>
            <person name="Hirao M."/>
            <person name="Ohmori Y."/>
            <person name="Kawabata A."/>
            <person name="Hikiji T."/>
            <person name="Kobatake N."/>
            <person name="Inagaki H."/>
            <person name="Ikema Y."/>
            <person name="Okamoto S."/>
            <person name="Okitani R."/>
            <person name="Kawakami T."/>
            <person name="Noguchi S."/>
            <person name="Itoh T."/>
            <person name="Shigeta K."/>
            <person name="Senba T."/>
            <person name="Matsumura K."/>
            <person name="Nakajima Y."/>
            <person name="Mizuno T."/>
            <person name="Morinaga M."/>
            <person name="Sasaki M."/>
            <person name="Togashi T."/>
            <person name="Oyama M."/>
            <person name="Hata H."/>
            <person name="Watanabe M."/>
            <person name="Komatsu T."/>
            <person name="Mizushima-Sugano J."/>
            <person name="Satoh T."/>
            <person name="Shirai Y."/>
            <person name="Takahashi Y."/>
            <person name="Nakagawa K."/>
            <person name="Okumura K."/>
            <person name="Nagase T."/>
            <person name="Nomura N."/>
            <person name="Kikuchi H."/>
            <person name="Masuho Y."/>
            <person name="Yamashita R."/>
            <person name="Nakai K."/>
            <person name="Yada T."/>
            <person name="Nakamura Y."/>
            <person name="Ohara O."/>
            <person name="Isogai T."/>
            <person name="Sugano S."/>
        </authorList>
    </citation>
    <scope>NUCLEOTIDE SEQUENCE [LARGE SCALE MRNA]</scope>
</reference>
<reference key="5">
    <citation type="submission" date="2005-04" db="EMBL/GenBank/DDBJ databases">
        <authorList>
            <person name="Suzuki Y."/>
            <person name="Sugano S."/>
            <person name="Totoki Y."/>
            <person name="Toyoda A."/>
            <person name="Takeda T."/>
            <person name="Sakaki Y."/>
            <person name="Tanaka A."/>
            <person name="Yokoyama S."/>
        </authorList>
    </citation>
    <scope>NUCLEOTIDE SEQUENCE [LARGE SCALE MRNA]</scope>
    <source>
        <tissue>Adipose tissue</tissue>
    </source>
</reference>
<reference key="6">
    <citation type="submission" date="2005-07" db="EMBL/GenBank/DDBJ databases">
        <authorList>
            <person name="Mural R.J."/>
            <person name="Istrail S."/>
            <person name="Sutton G.G."/>
            <person name="Florea L."/>
            <person name="Halpern A.L."/>
            <person name="Mobarry C.M."/>
            <person name="Lippert R."/>
            <person name="Walenz B."/>
            <person name="Shatkay H."/>
            <person name="Dew I."/>
            <person name="Miller J.R."/>
            <person name="Flanigan M.J."/>
            <person name="Edwards N.J."/>
            <person name="Bolanos R."/>
            <person name="Fasulo D."/>
            <person name="Halldorsson B.V."/>
            <person name="Hannenhalli S."/>
            <person name="Turner R."/>
            <person name="Yooseph S."/>
            <person name="Lu F."/>
            <person name="Nusskern D.R."/>
            <person name="Shue B.C."/>
            <person name="Zheng X.H."/>
            <person name="Zhong F."/>
            <person name="Delcher A.L."/>
            <person name="Huson D.H."/>
            <person name="Kravitz S.A."/>
            <person name="Mouchard L."/>
            <person name="Reinert K."/>
            <person name="Remington K.A."/>
            <person name="Clark A.G."/>
            <person name="Waterman M.S."/>
            <person name="Eichler E.E."/>
            <person name="Adams M.D."/>
            <person name="Hunkapiller M.W."/>
            <person name="Myers E.W."/>
            <person name="Venter J.C."/>
        </authorList>
    </citation>
    <scope>NUCLEOTIDE SEQUENCE [LARGE SCALE GENOMIC DNA]</scope>
</reference>
<reference key="7">
    <citation type="journal article" date="2004" name="Genome Res.">
        <title>The status, quality, and expansion of the NIH full-length cDNA project: the Mammalian Gene Collection (MGC).</title>
        <authorList>
            <consortium name="The MGC Project Team"/>
        </authorList>
    </citation>
    <scope>NUCLEOTIDE SEQUENCE [LARGE SCALE MRNA]</scope>
    <source>
        <tissue>Lung</tissue>
        <tissue>Skin</tissue>
    </source>
</reference>
<reference key="8">
    <citation type="journal article" date="2003" name="Nature">
        <title>Cloning of adiponectin receptors that mediate antidiabetic metabolic effects.</title>
        <authorList>
            <person name="Yamauchi T."/>
            <person name="Kamon J."/>
            <person name="Ito Y."/>
            <person name="Tsuchida A."/>
            <person name="Yokomizo T."/>
            <person name="Kita S."/>
            <person name="Sugiyama T."/>
            <person name="Miyagishi M."/>
            <person name="Hara K."/>
            <person name="Tsunoda M."/>
            <person name="Murakami K."/>
            <person name="Ohteki T."/>
            <person name="Uchida S."/>
            <person name="Takekawa S."/>
            <person name="Waki H."/>
            <person name="Tsuno N.H."/>
            <person name="Shibata Y."/>
            <person name="Terauchi Y."/>
            <person name="Froguel P."/>
            <person name="Tobe K."/>
            <person name="Koyasu S."/>
            <person name="Taira K."/>
            <person name="Kitamura T."/>
            <person name="Shimizu T."/>
            <person name="Nagai R."/>
            <person name="Kadowaki T."/>
        </authorList>
    </citation>
    <scope>FUNCTION</scope>
    <scope>SUBUNIT</scope>
    <scope>SUBCELLULAR LOCATION</scope>
    <scope>TISSUE SPECIFICITY</scope>
    <scope>TOPOLOGY</scope>
</reference>
<reference key="9">
    <citation type="journal article" date="2015" name="Nature">
        <title>Crystal structures of the human adiponectin receptors.</title>
        <authorList>
            <person name="Tanabe H."/>
            <person name="Fujii Y."/>
            <person name="Okada-Iwabu M."/>
            <person name="Iwabu M."/>
            <person name="Nakamura Y."/>
            <person name="Hosaka T."/>
            <person name="Motoyama K."/>
            <person name="Ikeda M."/>
            <person name="Wakiyama M."/>
            <person name="Terada T."/>
            <person name="Ohsawa N."/>
            <person name="Hato M."/>
            <person name="Ogasawara S."/>
            <person name="Hino T."/>
            <person name="Murata T."/>
            <person name="Iwata S."/>
            <person name="Hirata K."/>
            <person name="Kawano Y."/>
            <person name="Yamamoto M."/>
            <person name="Kimura-Someya T."/>
            <person name="Shirouzu M."/>
            <person name="Yamauchi T."/>
            <person name="Kadowaki T."/>
            <person name="Yokoyama S."/>
        </authorList>
    </citation>
    <scope>X-RAY CRYSTALLOGRAPHY (2.90 ANGSTROMS) OF 89-375 IN COMPLEX WITH ZINC</scope>
    <scope>FUNCTION</scope>
    <scope>TOPOLOGY</scope>
    <scope>SUBCELLULAR LOCATION</scope>
    <scope>MUTAGENESIS OF 161-MET--LEU-167; HIS-191; ASP-208; 229-TYR--SER-231; 291-PHE--VAL-297; HIS-337 AND HIS-341</scope>
</reference>
<organism>
    <name type="scientific">Homo sapiens</name>
    <name type="common">Human</name>
    <dbReference type="NCBI Taxonomy" id="9606"/>
    <lineage>
        <taxon>Eukaryota</taxon>
        <taxon>Metazoa</taxon>
        <taxon>Chordata</taxon>
        <taxon>Craniata</taxon>
        <taxon>Vertebrata</taxon>
        <taxon>Euteleostomi</taxon>
        <taxon>Mammalia</taxon>
        <taxon>Eutheria</taxon>
        <taxon>Euarchontoglires</taxon>
        <taxon>Primates</taxon>
        <taxon>Haplorrhini</taxon>
        <taxon>Catarrhini</taxon>
        <taxon>Hominidae</taxon>
        <taxon>Homo</taxon>
    </lineage>
</organism>
<feature type="chain" id="PRO_0000218827" description="Adiponectin receptor protein 1">
    <location>
        <begin position="1"/>
        <end position="375"/>
    </location>
</feature>
<feature type="topological domain" description="Cytoplasmic" evidence="5">
    <location>
        <begin position="1"/>
        <end position="136"/>
    </location>
</feature>
<feature type="transmembrane region" description="Helical; Name=1" evidence="5">
    <location>
        <begin position="137"/>
        <end position="157"/>
    </location>
</feature>
<feature type="topological domain" description="Extracellular" evidence="5">
    <location>
        <begin position="158"/>
        <end position="170"/>
    </location>
</feature>
<feature type="transmembrane region" description="Helical; Name=2" evidence="5">
    <location>
        <begin position="171"/>
        <end position="191"/>
    </location>
</feature>
<feature type="topological domain" description="Cytoplasmic" evidence="5">
    <location>
        <begin position="192"/>
        <end position="203"/>
    </location>
</feature>
<feature type="transmembrane region" description="Helical; Name=3" evidence="5">
    <location>
        <begin position="204"/>
        <end position="224"/>
    </location>
</feature>
<feature type="topological domain" description="Extracellular" evidence="5">
    <location>
        <begin position="225"/>
        <end position="234"/>
    </location>
</feature>
<feature type="transmembrane region" description="Helical; Name=4" evidence="5">
    <location>
        <begin position="235"/>
        <end position="255"/>
    </location>
</feature>
<feature type="topological domain" description="Cytoplasmic" evidence="5">
    <location>
        <begin position="256"/>
        <end position="264"/>
    </location>
</feature>
<feature type="transmembrane region" description="Helical; Name=5" evidence="5">
    <location>
        <begin position="265"/>
        <end position="285"/>
    </location>
</feature>
<feature type="topological domain" description="Extracellular" evidence="5">
    <location>
        <begin position="286"/>
        <end position="298"/>
    </location>
</feature>
<feature type="transmembrane region" description="Helical; Name=6" evidence="5">
    <location>
        <begin position="299"/>
        <end position="319"/>
    </location>
</feature>
<feature type="topological domain" description="Cytoplasmic" evidence="5">
    <location>
        <begin position="320"/>
        <end position="337"/>
    </location>
</feature>
<feature type="transmembrane region" description="Helical; Name=7" evidence="5">
    <location>
        <begin position="338"/>
        <end position="358"/>
    </location>
</feature>
<feature type="topological domain" description="Extracellular" evidence="5">
    <location>
        <begin position="359"/>
        <end position="375"/>
    </location>
</feature>
<feature type="region of interest" description="Disordered" evidence="2">
    <location>
        <begin position="1"/>
        <end position="60"/>
    </location>
</feature>
<feature type="binding site" evidence="5">
    <location>
        <position position="191"/>
    </location>
    <ligand>
        <name>Zn(2+)</name>
        <dbReference type="ChEBI" id="CHEBI:29105"/>
    </ligand>
</feature>
<feature type="binding site" evidence="5">
    <location>
        <position position="337"/>
    </location>
    <ligand>
        <name>Zn(2+)</name>
        <dbReference type="ChEBI" id="CHEBI:29105"/>
    </ligand>
</feature>
<feature type="binding site" evidence="5">
    <location>
        <position position="341"/>
    </location>
    <ligand>
        <name>Zn(2+)</name>
        <dbReference type="ChEBI" id="CHEBI:29105"/>
    </ligand>
</feature>
<feature type="mutagenesis site" description="Decreases activation of AMPK in response to ADIPOQ binding; when associated with 229-G--G-231 and 291-S--S-297." evidence="5">
    <original>MYFMAPL</original>
    <variation>SGSSGGS</variation>
    <location>
        <begin position="161"/>
        <end position="167"/>
    </location>
</feature>
<feature type="mutagenesis site" description="Decreases activation of AMPK in response to ADIPOQ binding; when associated with A-208; A-337 and A-341." evidence="5">
    <original>H</original>
    <variation>A</variation>
    <location>
        <position position="191"/>
    </location>
</feature>
<feature type="mutagenesis site" description="Decreases activation of AMPK in response to ADIPOQ binding; when associated with A-191; A-337 and A-341." evidence="5">
    <original>D</original>
    <variation>A</variation>
    <location>
        <position position="208"/>
    </location>
</feature>
<feature type="mutagenesis site" description="Decreases activation of AMPK in response to ADIPOQ binding; when associated with 161-S--S-167 and 291-S--S-297." evidence="5">
    <original>YCS</original>
    <variation>GGG</variation>
    <location>
        <begin position="229"/>
        <end position="231"/>
    </location>
</feature>
<feature type="mutagenesis site" description="Decreases activation of AMPK in response to ADIPOQ binding; when associated with 161-S--S-167 and 229-G--G-231." evidence="5">
    <original>FVKATTV</original>
    <variation>SSSGGGS</variation>
    <location>
        <begin position="291"/>
        <end position="297"/>
    </location>
</feature>
<feature type="mutagenesis site" description="Decreases activation of AMPK in response to ADIPOQ binding; when associated with A-191; A-208 and A-341." evidence="5">
    <original>H</original>
    <variation>A</variation>
    <location>
        <position position="337"/>
    </location>
</feature>
<feature type="mutagenesis site" description="Decreases activation of AMPK in response to ADIPOQ binding; when associated with A-191; A-208 and A-337." evidence="5">
    <original>H</original>
    <variation>A</variation>
    <location>
        <position position="341"/>
    </location>
</feature>
<feature type="sequence conflict" description="In Ref. 4; BAG50922." evidence="8" ref="4">
    <original>C</original>
    <variation>W</variation>
    <location>
        <position position="183"/>
    </location>
</feature>
<feature type="sequence conflict" description="In Ref. 5; BAD96223." evidence="8" ref="5">
    <original>F</original>
    <variation>Y</variation>
    <location>
        <position position="340"/>
    </location>
</feature>
<feature type="helix" evidence="10">
    <location>
        <begin position="97"/>
        <end position="99"/>
    </location>
</feature>
<feature type="helix" evidence="10">
    <location>
        <begin position="102"/>
        <end position="104"/>
    </location>
</feature>
<feature type="helix" evidence="10">
    <location>
        <begin position="121"/>
        <end position="126"/>
    </location>
</feature>
<feature type="helix" evidence="10">
    <location>
        <begin position="127"/>
        <end position="129"/>
    </location>
</feature>
<feature type="helix" evidence="10">
    <location>
        <begin position="135"/>
        <end position="156"/>
    </location>
</feature>
<feature type="turn" evidence="10">
    <location>
        <begin position="161"/>
        <end position="163"/>
    </location>
</feature>
<feature type="strand" evidence="10">
    <location>
        <begin position="164"/>
        <end position="167"/>
    </location>
</feature>
<feature type="helix" evidence="10">
    <location>
        <begin position="169"/>
        <end position="192"/>
    </location>
</feature>
<feature type="helix" evidence="12">
    <location>
        <begin position="193"/>
        <end position="195"/>
    </location>
</feature>
<feature type="helix" evidence="10">
    <location>
        <begin position="198"/>
        <end position="227"/>
    </location>
</feature>
<feature type="helix" evidence="10">
    <location>
        <begin position="232"/>
        <end position="254"/>
    </location>
</feature>
<feature type="strand" evidence="10">
    <location>
        <begin position="256"/>
        <end position="258"/>
    </location>
</feature>
<feature type="turn" evidence="12">
    <location>
        <begin position="261"/>
        <end position="263"/>
    </location>
</feature>
<feature type="helix" evidence="10">
    <location>
        <begin position="266"/>
        <end position="277"/>
    </location>
</feature>
<feature type="helix" evidence="10">
    <location>
        <begin position="279"/>
        <end position="289"/>
    </location>
</feature>
<feature type="helix" evidence="10">
    <location>
        <begin position="291"/>
        <end position="296"/>
    </location>
</feature>
<feature type="turn" evidence="11">
    <location>
        <begin position="297"/>
        <end position="299"/>
    </location>
</feature>
<feature type="turn" evidence="10">
    <location>
        <begin position="300"/>
        <end position="303"/>
    </location>
</feature>
<feature type="helix" evidence="10">
    <location>
        <begin position="304"/>
        <end position="319"/>
    </location>
</feature>
<feature type="turn" evidence="10">
    <location>
        <begin position="320"/>
        <end position="325"/>
    </location>
</feature>
<feature type="turn" evidence="10">
    <location>
        <begin position="327"/>
        <end position="329"/>
    </location>
</feature>
<feature type="strand" evidence="10">
    <location>
        <begin position="330"/>
        <end position="334"/>
    </location>
</feature>
<feature type="helix" evidence="10">
    <location>
        <begin position="336"/>
        <end position="364"/>
    </location>
</feature>
<proteinExistence type="evidence at protein level"/>
<sequence length="375" mass="42616">MSSHKGSVVAQGNGAPASNREADTVELAELGPLLEEKGKRVIANPPKAEEEQTCPVPQEEEEEVRVLTLPLQAHHAMEKMEEFVYKVWEGRWRVIPYDVLPDWLKDNDYLLHGHRPPMPSFRACFKSIFRIHTETGNIWTHLLGFVLFLFLGILTMLRPNMYFMAPLQEKVVFGMFFLGAVLCLSFSWLFHTVYCHSEKVSRTFSKLDYSGIALLIMGSFVPWLYYSFYCSPQPRLIYLSIVCVLGISAIIVAQWDRFATPKHRQTRAGVFLGLGLSGVVPTMHFTIAEGFVKATTVGQMGWFFLMAVMYITGAGLYAARIPERFFPGKFDIWFQSHQIFHVLVVAAAFVHFYGVSNLQEFRYGLEGGCTDDTLL</sequence>
<gene>
    <name evidence="9" type="primary">ADIPOR1</name>
    <name evidence="7" type="synonym">PAQR1</name>
    <name type="synonym">TESBP1A</name>
    <name type="ORF">CGI-45</name>
</gene>
<keyword id="KW-0002">3D-structure</keyword>
<keyword id="KW-1003">Cell membrane</keyword>
<keyword id="KW-0276">Fatty acid metabolism</keyword>
<keyword id="KW-0443">Lipid metabolism</keyword>
<keyword id="KW-0472">Membrane</keyword>
<keyword id="KW-0479">Metal-binding</keyword>
<keyword id="KW-1267">Proteomics identification</keyword>
<keyword id="KW-0675">Receptor</keyword>
<keyword id="KW-1185">Reference proteome</keyword>
<keyword id="KW-0812">Transmembrane</keyword>
<keyword id="KW-1133">Transmembrane helix</keyword>
<keyword id="KW-0862">Zinc</keyword>
<comment type="function">
    <text evidence="1 3 5">Receptor for ADIPOQ, an essential hormone secreted by adipocytes that regulates glucose and lipid metabolism (PubMed:12802337, PubMed:25855295). Required for normal glucose and fat homeostasis and for maintaining a normal body weight. ADIPOQ-binding activates a signaling cascade that leads to increased AMPK activity, and ultimately to increased fatty acid oxidation, increased glucose uptake and decreased gluconeogenesis. Has high affinity for globular adiponectin and low affinity for full-length adiponectin (By similarity).</text>
</comment>
<comment type="subunit">
    <text evidence="1 3">May form homooligomers and heterooligomers with ADIPOR2 (PubMed:12802337). Interacts with APPL2 (via BAR domain); hinders the accessibility of APPL1 to ADIPOR1; negatively regulates adiponectin signaling; ADIPOQ dissociates this interaction and facilitates the recruitment of APPL1 to ADIPOR1. Interacts with APPL1; ADIPOQ enhances this interaction; inhibites adiponectin-stimulated binding of APPL2 to ADIPOR1 (By similarity).</text>
</comment>
<comment type="interaction">
    <interactant intactId="EBI-1632076">
        <id>Q96A54</id>
    </interactant>
    <interactant intactId="EBI-1632076">
        <id>Q96A54</id>
        <label>ADIPOR1</label>
    </interactant>
    <organismsDiffer>false</organismsDiffer>
    <experiments>3</experiments>
</comment>
<comment type="interaction">
    <interactant intactId="EBI-1632076">
        <id>Q96A54</id>
    </interactant>
    <interactant intactId="EBI-741243">
        <id>Q9UKG1</id>
        <label>APPL1</label>
    </interactant>
    <organismsDiffer>false</organismsDiffer>
    <experiments>6</experiments>
</comment>
<comment type="interaction">
    <interactant intactId="EBI-1632076">
        <id>Q96A54</id>
    </interactant>
    <interactant intactId="EBI-18271435">
        <id>Q0VAB0</id>
        <label>TBXA2R</label>
    </interactant>
    <organismsDiffer>false</organismsDiffer>
    <experiments>3</experiments>
</comment>
<comment type="interaction">
    <interactant intactId="EBI-1632076">
        <id>Q96A54</id>
    </interactant>
    <interactant intactId="EBI-528701">
        <id>O00206</id>
        <label>TLR4</label>
    </interactant>
    <organismsDiffer>false</organismsDiffer>
    <experiments>2</experiments>
</comment>
<comment type="subcellular location">
    <subcellularLocation>
        <location evidence="3 5">Cell membrane</location>
        <topology evidence="3 5">Multi-pass membrane protein</topology>
    </subcellularLocation>
    <text evidence="3">Localized to the cell membrane and intracellular organelles.</text>
</comment>
<comment type="tissue specificity">
    <text evidence="3 4">Widely expressed (PubMed:16044242). Highly expressed in heart and skeletal muscle (PubMed:12802337). Expressed at intermediate level in brain, spleen, kidney, liver, placenta, lung and peripheral blood leukocytes (PubMed:12802337). Weakly expressed in colon, thymus and small intestine (PubMed:12802337).</text>
</comment>
<comment type="domain">
    <text evidence="3">The N-terminus is cytoplasmic and the C-terminus is extracellular, contrary to what is observed for G-protein coupled receptors. Unlike G-protein coupled receptors, transmembrane helices are not kinked or tilted relative to the plane of the membrane.</text>
</comment>
<comment type="similarity">
    <text evidence="8">Belongs to the ADIPOR family.</text>
</comment>
<comment type="sequence caution" evidence="8">
    <conflict type="frameshift">
        <sequence resource="EMBL-CDS" id="AAD34040"/>
    </conflict>
</comment>
<comment type="online information" name="Atlas of Genetics and Cytogenetics in Oncology and Haematology">
    <link uri="https://atlasgeneticsoncology.org/gene/44512/ADIPOR1"/>
</comment>
<dbReference type="EMBL" id="AY424279">
    <property type="protein sequence ID" value="AAR08367.1"/>
    <property type="molecule type" value="mRNA"/>
</dbReference>
<dbReference type="EMBL" id="AF125179">
    <property type="protein sequence ID" value="AAQ13552.1"/>
    <property type="molecule type" value="mRNA"/>
</dbReference>
<dbReference type="EMBL" id="AF151803">
    <property type="protein sequence ID" value="AAD34040.1"/>
    <property type="status" value="ALT_FRAME"/>
    <property type="molecule type" value="mRNA"/>
</dbReference>
<dbReference type="EMBL" id="AK001484">
    <property type="protein sequence ID" value="BAG50922.1"/>
    <property type="molecule type" value="mRNA"/>
</dbReference>
<dbReference type="EMBL" id="AK222503">
    <property type="protein sequence ID" value="BAD96223.1"/>
    <property type="molecule type" value="mRNA"/>
</dbReference>
<dbReference type="EMBL" id="CH471067">
    <property type="protein sequence ID" value="EAW91450.1"/>
    <property type="molecule type" value="Genomic_DNA"/>
</dbReference>
<dbReference type="EMBL" id="BC001594">
    <property type="protein sequence ID" value="AAH01594.1"/>
    <property type="molecule type" value="mRNA"/>
</dbReference>
<dbReference type="EMBL" id="BC010743">
    <property type="protein sequence ID" value="AAH10743.1"/>
    <property type="molecule type" value="mRNA"/>
</dbReference>
<dbReference type="CCDS" id="CCDS1430.1"/>
<dbReference type="RefSeq" id="NP_001277482.1">
    <property type="nucleotide sequence ID" value="NM_001290553.2"/>
</dbReference>
<dbReference type="RefSeq" id="NP_001277486.1">
    <property type="nucleotide sequence ID" value="NM_001290557.1"/>
</dbReference>
<dbReference type="RefSeq" id="NP_001277558.1">
    <property type="nucleotide sequence ID" value="NM_001290629.1"/>
</dbReference>
<dbReference type="RefSeq" id="NP_057083.2">
    <property type="nucleotide sequence ID" value="NM_015999.5"/>
</dbReference>
<dbReference type="RefSeq" id="XP_047277915.1">
    <property type="nucleotide sequence ID" value="XM_047421959.1"/>
</dbReference>
<dbReference type="RefSeq" id="XP_054192855.1">
    <property type="nucleotide sequence ID" value="XM_054336880.1"/>
</dbReference>
<dbReference type="PDB" id="5LXG">
    <property type="method" value="X-ray"/>
    <property type="resolution" value="2.73 A"/>
    <property type="chains" value="A=89-375"/>
</dbReference>
<dbReference type="PDB" id="6KRZ">
    <property type="method" value="X-ray"/>
    <property type="resolution" value="3.05 A"/>
    <property type="chains" value="A/B/C=89-375"/>
</dbReference>
<dbReference type="PDB" id="6KS0">
    <property type="method" value="X-ray"/>
    <property type="resolution" value="2.79 A"/>
    <property type="chains" value="A=89-375"/>
</dbReference>
<dbReference type="PDBsum" id="5LXG"/>
<dbReference type="PDBsum" id="6KRZ"/>
<dbReference type="PDBsum" id="6KS0"/>
<dbReference type="SMR" id="Q96A54"/>
<dbReference type="BioGRID" id="119283">
    <property type="interactions" value="56"/>
</dbReference>
<dbReference type="DIP" id="DIP-48622N"/>
<dbReference type="FunCoup" id="Q96A54">
    <property type="interactions" value="1465"/>
</dbReference>
<dbReference type="IntAct" id="Q96A54">
    <property type="interactions" value="41"/>
</dbReference>
<dbReference type="MINT" id="Q96A54"/>
<dbReference type="STRING" id="9606.ENSP00000341785"/>
<dbReference type="BindingDB" id="Q96A54"/>
<dbReference type="ChEMBL" id="CHEMBL3392946"/>
<dbReference type="TCDB" id="1.C.113.1.9">
    <property type="family name" value="the hemolysin iii (hly iii) family"/>
</dbReference>
<dbReference type="iPTMnet" id="Q96A54"/>
<dbReference type="PhosphoSitePlus" id="Q96A54"/>
<dbReference type="SwissPalm" id="Q96A54"/>
<dbReference type="BioMuta" id="ADIPOR1"/>
<dbReference type="DMDM" id="38372248"/>
<dbReference type="jPOST" id="Q96A54"/>
<dbReference type="MassIVE" id="Q96A54"/>
<dbReference type="PaxDb" id="9606-ENSP00000341785"/>
<dbReference type="PeptideAtlas" id="Q96A54"/>
<dbReference type="ProteomicsDB" id="75913"/>
<dbReference type="Pumba" id="Q96A54"/>
<dbReference type="ABCD" id="Q96A54">
    <property type="antibodies" value="1 sequenced antibody"/>
</dbReference>
<dbReference type="Antibodypedia" id="34534">
    <property type="antibodies" value="411 antibodies from 37 providers"/>
</dbReference>
<dbReference type="DNASU" id="51094"/>
<dbReference type="Ensembl" id="ENST00000340990.10">
    <property type="protein sequence ID" value="ENSP00000341785.5"/>
    <property type="gene ID" value="ENSG00000159346.13"/>
</dbReference>
<dbReference type="GeneID" id="51094"/>
<dbReference type="KEGG" id="hsa:51094"/>
<dbReference type="MANE-Select" id="ENST00000340990.10">
    <property type="protein sequence ID" value="ENSP00000341785.5"/>
    <property type="RefSeq nucleotide sequence ID" value="NM_015999.6"/>
    <property type="RefSeq protein sequence ID" value="NP_057083.2"/>
</dbReference>
<dbReference type="UCSC" id="uc001gyq.7">
    <property type="organism name" value="human"/>
</dbReference>
<dbReference type="AGR" id="HGNC:24040"/>
<dbReference type="CTD" id="51094"/>
<dbReference type="DisGeNET" id="51094"/>
<dbReference type="GeneCards" id="ADIPOR1"/>
<dbReference type="HGNC" id="HGNC:24040">
    <property type="gene designation" value="ADIPOR1"/>
</dbReference>
<dbReference type="HPA" id="ENSG00000159346">
    <property type="expression patterns" value="Low tissue specificity"/>
</dbReference>
<dbReference type="MalaCards" id="ADIPOR1"/>
<dbReference type="MIM" id="607945">
    <property type="type" value="gene"/>
</dbReference>
<dbReference type="neXtProt" id="NX_Q96A54"/>
<dbReference type="OpenTargets" id="ENSG00000159346"/>
<dbReference type="PharmGKB" id="PA134861801"/>
<dbReference type="VEuPathDB" id="HostDB:ENSG00000159346"/>
<dbReference type="eggNOG" id="KOG0748">
    <property type="taxonomic scope" value="Eukaryota"/>
</dbReference>
<dbReference type="GeneTree" id="ENSGT00940000154563"/>
<dbReference type="HOGENOM" id="CLU_023075_1_0_1"/>
<dbReference type="InParanoid" id="Q96A54"/>
<dbReference type="OMA" id="IGNACDY"/>
<dbReference type="OrthoDB" id="5585746at2759"/>
<dbReference type="PAN-GO" id="Q96A54">
    <property type="GO annotations" value="3 GO annotations based on evolutionary models"/>
</dbReference>
<dbReference type="PhylomeDB" id="Q96A54"/>
<dbReference type="TreeFam" id="TF313640"/>
<dbReference type="PathwayCommons" id="Q96A54"/>
<dbReference type="Reactome" id="R-HSA-163680">
    <property type="pathway name" value="AMPK inhibits chREBP transcriptional activation activity"/>
</dbReference>
<dbReference type="SignaLink" id="Q96A54"/>
<dbReference type="SIGNOR" id="Q96A54"/>
<dbReference type="BioGRID-ORCS" id="51094">
    <property type="hits" value="20 hits in 1156 CRISPR screens"/>
</dbReference>
<dbReference type="ChiTaRS" id="ADIPOR1">
    <property type="organism name" value="human"/>
</dbReference>
<dbReference type="GeneWiki" id="ADIPOR1"/>
<dbReference type="GenomeRNAi" id="51094"/>
<dbReference type="Pharos" id="Q96A54">
    <property type="development level" value="Tbio"/>
</dbReference>
<dbReference type="PRO" id="PR:Q96A54"/>
<dbReference type="Proteomes" id="UP000005640">
    <property type="component" value="Chromosome 1"/>
</dbReference>
<dbReference type="RNAct" id="Q96A54">
    <property type="molecule type" value="protein"/>
</dbReference>
<dbReference type="Bgee" id="ENSG00000159346">
    <property type="expression patterns" value="Expressed in blood and 206 other cell types or tissues"/>
</dbReference>
<dbReference type="ExpressionAtlas" id="Q96A54">
    <property type="expression patterns" value="baseline and differential"/>
</dbReference>
<dbReference type="GO" id="GO:0016020">
    <property type="term" value="C:membrane"/>
    <property type="evidence" value="ECO:0007005"/>
    <property type="project" value="UniProtKB"/>
</dbReference>
<dbReference type="GO" id="GO:0005886">
    <property type="term" value="C:plasma membrane"/>
    <property type="evidence" value="ECO:0000314"/>
    <property type="project" value="UniProtKB"/>
</dbReference>
<dbReference type="GO" id="GO:0097003">
    <property type="term" value="F:adipokinetic hormone receptor activity"/>
    <property type="evidence" value="ECO:0000314"/>
    <property type="project" value="UniProtKB"/>
</dbReference>
<dbReference type="GO" id="GO:0055100">
    <property type="term" value="F:adiponectin binding"/>
    <property type="evidence" value="ECO:0000314"/>
    <property type="project" value="UniProtKB"/>
</dbReference>
<dbReference type="GO" id="GO:0042802">
    <property type="term" value="F:identical protein binding"/>
    <property type="evidence" value="ECO:0007669"/>
    <property type="project" value="Ensembl"/>
</dbReference>
<dbReference type="GO" id="GO:0046872">
    <property type="term" value="F:metal ion binding"/>
    <property type="evidence" value="ECO:0007669"/>
    <property type="project" value="UniProtKB-KW"/>
</dbReference>
<dbReference type="GO" id="GO:0019901">
    <property type="term" value="F:protein kinase binding"/>
    <property type="evidence" value="ECO:0000353"/>
    <property type="project" value="BHF-UCL"/>
</dbReference>
<dbReference type="GO" id="GO:0038023">
    <property type="term" value="F:signaling receptor activity"/>
    <property type="evidence" value="ECO:0000318"/>
    <property type="project" value="GO_Central"/>
</dbReference>
<dbReference type="GO" id="GO:0033211">
    <property type="term" value="P:adiponectin-activated signaling pathway"/>
    <property type="evidence" value="ECO:0000314"/>
    <property type="project" value="UniProtKB"/>
</dbReference>
<dbReference type="GO" id="GO:0019395">
    <property type="term" value="P:fatty acid oxidation"/>
    <property type="evidence" value="ECO:0000314"/>
    <property type="project" value="UniProtKB"/>
</dbReference>
<dbReference type="GO" id="GO:0042593">
    <property type="term" value="P:glucose homeostasis"/>
    <property type="evidence" value="ECO:0000250"/>
    <property type="project" value="UniProtKB"/>
</dbReference>
<dbReference type="GO" id="GO:0009755">
    <property type="term" value="P:hormone-mediated signaling pathway"/>
    <property type="evidence" value="ECO:0000314"/>
    <property type="project" value="UniProtKB"/>
</dbReference>
<dbReference type="GO" id="GO:0033210">
    <property type="term" value="P:leptin-mediated signaling pathway"/>
    <property type="evidence" value="ECO:0007669"/>
    <property type="project" value="Ensembl"/>
</dbReference>
<dbReference type="GO" id="GO:0030308">
    <property type="term" value="P:negative regulation of cell growth"/>
    <property type="evidence" value="ECO:0007669"/>
    <property type="project" value="Ensembl"/>
</dbReference>
<dbReference type="GO" id="GO:0010633">
    <property type="term" value="P:negative regulation of epithelial cell migration"/>
    <property type="evidence" value="ECO:0000315"/>
    <property type="project" value="BHF-UCL"/>
</dbReference>
<dbReference type="GO" id="GO:0010719">
    <property type="term" value="P:negative regulation of epithelial to mesenchymal transition"/>
    <property type="evidence" value="ECO:0000315"/>
    <property type="project" value="BHF-UCL"/>
</dbReference>
<dbReference type="GO" id="GO:1901223">
    <property type="term" value="P:negative regulation of non-canonical NF-kappaB signal transduction"/>
    <property type="evidence" value="ECO:0000315"/>
    <property type="project" value="BHF-UCL"/>
</dbReference>
<dbReference type="GO" id="GO:0046426">
    <property type="term" value="P:negative regulation of receptor signaling pathway via JAK-STAT"/>
    <property type="evidence" value="ECO:0000315"/>
    <property type="project" value="BHF-UCL"/>
</dbReference>
<dbReference type="GO" id="GO:0120162">
    <property type="term" value="P:positive regulation of cold-induced thermogenesis"/>
    <property type="evidence" value="ECO:0000250"/>
    <property type="project" value="YuBioLab"/>
</dbReference>
<dbReference type="GO" id="GO:0046628">
    <property type="term" value="P:positive regulation of insulin receptor signaling pathway"/>
    <property type="evidence" value="ECO:0007669"/>
    <property type="project" value="Ensembl"/>
</dbReference>
<dbReference type="GO" id="GO:0046427">
    <property type="term" value="P:positive regulation of receptor signaling pathway via JAK-STAT"/>
    <property type="evidence" value="ECO:0007669"/>
    <property type="project" value="Ensembl"/>
</dbReference>
<dbReference type="GO" id="GO:0010906">
    <property type="term" value="P:regulation of glucose metabolic process"/>
    <property type="evidence" value="ECO:0000250"/>
    <property type="project" value="UniProtKB"/>
</dbReference>
<dbReference type="GO" id="GO:0019216">
    <property type="term" value="P:regulation of lipid metabolic process"/>
    <property type="evidence" value="ECO:0000250"/>
    <property type="project" value="UniProtKB"/>
</dbReference>
<dbReference type="InterPro" id="IPR004254">
    <property type="entry name" value="AdipoR/HlyIII-related"/>
</dbReference>
<dbReference type="PANTHER" id="PTHR20855:SF40">
    <property type="entry name" value="ADIPONECTIN RECEPTOR PROTEIN 1"/>
    <property type="match status" value="1"/>
</dbReference>
<dbReference type="PANTHER" id="PTHR20855">
    <property type="entry name" value="ADIPOR/PROGESTIN RECEPTOR-RELATED"/>
    <property type="match status" value="1"/>
</dbReference>
<dbReference type="Pfam" id="PF03006">
    <property type="entry name" value="HlyIII"/>
    <property type="match status" value="1"/>
</dbReference>
<name>PAQR1_HUMAN</name>
<evidence type="ECO:0000250" key="1">
    <source>
        <dbReference type="UniProtKB" id="Q91VH1"/>
    </source>
</evidence>
<evidence type="ECO:0000256" key="2">
    <source>
        <dbReference type="SAM" id="MobiDB-lite"/>
    </source>
</evidence>
<evidence type="ECO:0000269" key="3">
    <source>
    </source>
</evidence>
<evidence type="ECO:0000269" key="4">
    <source>
    </source>
</evidence>
<evidence type="ECO:0000269" key="5">
    <source>
    </source>
</evidence>
<evidence type="ECO:0000303" key="6">
    <source>
    </source>
</evidence>
<evidence type="ECO:0000303" key="7">
    <source>
    </source>
</evidence>
<evidence type="ECO:0000305" key="8"/>
<evidence type="ECO:0000312" key="9">
    <source>
        <dbReference type="HGNC" id="HGNC:24040"/>
    </source>
</evidence>
<evidence type="ECO:0007829" key="10">
    <source>
        <dbReference type="PDB" id="5LXG"/>
    </source>
</evidence>
<evidence type="ECO:0007829" key="11">
    <source>
        <dbReference type="PDB" id="6KRZ"/>
    </source>
</evidence>
<evidence type="ECO:0007829" key="12">
    <source>
        <dbReference type="PDB" id="6KS0"/>
    </source>
</evidence>
<accession>Q96A54</accession>
<accession>B3KMB0</accession>
<accession>Q53HS7</accession>
<accession>Q53YY6</accession>
<accession>Q9Y360</accession>
<protein>
    <recommendedName>
        <fullName evidence="6">Adiponectin receptor protein 1</fullName>
    </recommendedName>
    <alternativeName>
        <fullName evidence="7">Progestin and adipoQ receptor family member 1</fullName>
    </alternativeName>
    <alternativeName>
        <fullName>Progestin and adipoQ receptor family member I</fullName>
    </alternativeName>
</protein>